<accession>A4WMX1</accession>
<keyword id="KW-0028">Amino-acid biosynthesis</keyword>
<keyword id="KW-0368">Histidine biosynthesis</keyword>
<keyword id="KW-0378">Hydrolase</keyword>
<keyword id="KW-0486">Methionine biosynthesis</keyword>
<keyword id="KW-0511">Multifunctional enzyme</keyword>
<keyword id="KW-0521">NADP</keyword>
<keyword id="KW-0554">One-carbon metabolism</keyword>
<keyword id="KW-0560">Oxidoreductase</keyword>
<keyword id="KW-0658">Purine biosynthesis</keyword>
<feature type="chain" id="PRO_0000305899" description="Bifunctional protein FolD">
    <location>
        <begin position="1"/>
        <end position="311"/>
    </location>
</feature>
<feature type="binding site" evidence="1">
    <location>
        <begin position="174"/>
        <end position="176"/>
    </location>
    <ligand>
        <name>NADP(+)</name>
        <dbReference type="ChEBI" id="CHEBI:58349"/>
    </ligand>
</feature>
<gene>
    <name evidence="1" type="primary">folD</name>
    <name type="ordered locus">Pars_2192</name>
</gene>
<organism>
    <name type="scientific">Pyrobaculum arsenaticum (strain DSM 13514 / JCM 11321 / PZ6)</name>
    <dbReference type="NCBI Taxonomy" id="340102"/>
    <lineage>
        <taxon>Archaea</taxon>
        <taxon>Thermoproteota</taxon>
        <taxon>Thermoprotei</taxon>
        <taxon>Thermoproteales</taxon>
        <taxon>Thermoproteaceae</taxon>
        <taxon>Pyrobaculum</taxon>
    </lineage>
</organism>
<dbReference type="EC" id="1.5.1.5" evidence="1"/>
<dbReference type="EC" id="3.5.4.9" evidence="1"/>
<dbReference type="EMBL" id="CP000660">
    <property type="protein sequence ID" value="ABP51738.1"/>
    <property type="molecule type" value="Genomic_DNA"/>
</dbReference>
<dbReference type="RefSeq" id="WP_011901641.1">
    <property type="nucleotide sequence ID" value="NC_009376.1"/>
</dbReference>
<dbReference type="SMR" id="A4WMX1"/>
<dbReference type="STRING" id="340102.Pars_2192"/>
<dbReference type="GeneID" id="5054960"/>
<dbReference type="KEGG" id="pas:Pars_2192"/>
<dbReference type="HOGENOM" id="CLU_034045_2_1_2"/>
<dbReference type="OrthoDB" id="9455at2157"/>
<dbReference type="PhylomeDB" id="A4WMX1"/>
<dbReference type="UniPathway" id="UPA00193"/>
<dbReference type="Proteomes" id="UP000001567">
    <property type="component" value="Chromosome"/>
</dbReference>
<dbReference type="GO" id="GO:0005829">
    <property type="term" value="C:cytosol"/>
    <property type="evidence" value="ECO:0007669"/>
    <property type="project" value="TreeGrafter"/>
</dbReference>
<dbReference type="GO" id="GO:0004477">
    <property type="term" value="F:methenyltetrahydrofolate cyclohydrolase activity"/>
    <property type="evidence" value="ECO:0007669"/>
    <property type="project" value="UniProtKB-UniRule"/>
</dbReference>
<dbReference type="GO" id="GO:0004488">
    <property type="term" value="F:methylenetetrahydrofolate dehydrogenase (NADP+) activity"/>
    <property type="evidence" value="ECO:0007669"/>
    <property type="project" value="UniProtKB-UniRule"/>
</dbReference>
<dbReference type="GO" id="GO:0000105">
    <property type="term" value="P:L-histidine biosynthetic process"/>
    <property type="evidence" value="ECO:0007669"/>
    <property type="project" value="UniProtKB-KW"/>
</dbReference>
<dbReference type="GO" id="GO:0009086">
    <property type="term" value="P:methionine biosynthetic process"/>
    <property type="evidence" value="ECO:0007669"/>
    <property type="project" value="UniProtKB-KW"/>
</dbReference>
<dbReference type="GO" id="GO:0006164">
    <property type="term" value="P:purine nucleotide biosynthetic process"/>
    <property type="evidence" value="ECO:0007669"/>
    <property type="project" value="UniProtKB-KW"/>
</dbReference>
<dbReference type="GO" id="GO:0035999">
    <property type="term" value="P:tetrahydrofolate interconversion"/>
    <property type="evidence" value="ECO:0007669"/>
    <property type="project" value="UniProtKB-UniRule"/>
</dbReference>
<dbReference type="CDD" id="cd01080">
    <property type="entry name" value="NAD_bind_m-THF_DH_Cyclohyd"/>
    <property type="match status" value="1"/>
</dbReference>
<dbReference type="Gene3D" id="3.40.50.10860">
    <property type="entry name" value="Leucine Dehydrogenase, chain A, domain 1"/>
    <property type="match status" value="1"/>
</dbReference>
<dbReference type="Gene3D" id="3.40.50.720">
    <property type="entry name" value="NAD(P)-binding Rossmann-like Domain"/>
    <property type="match status" value="1"/>
</dbReference>
<dbReference type="HAMAP" id="MF_01576">
    <property type="entry name" value="THF_DHG_CYH"/>
    <property type="match status" value="1"/>
</dbReference>
<dbReference type="InterPro" id="IPR046346">
    <property type="entry name" value="Aminoacid_DH-like_N_sf"/>
</dbReference>
<dbReference type="InterPro" id="IPR036291">
    <property type="entry name" value="NAD(P)-bd_dom_sf"/>
</dbReference>
<dbReference type="InterPro" id="IPR000672">
    <property type="entry name" value="THF_DH/CycHdrlase"/>
</dbReference>
<dbReference type="InterPro" id="IPR020630">
    <property type="entry name" value="THF_DH/CycHdrlase_cat_dom"/>
</dbReference>
<dbReference type="InterPro" id="IPR020631">
    <property type="entry name" value="THF_DH/CycHdrlase_NAD-bd_dom"/>
</dbReference>
<dbReference type="PANTHER" id="PTHR48099:SF5">
    <property type="entry name" value="C-1-TETRAHYDROFOLATE SYNTHASE, CYTOPLASMIC"/>
    <property type="match status" value="1"/>
</dbReference>
<dbReference type="PANTHER" id="PTHR48099">
    <property type="entry name" value="C-1-TETRAHYDROFOLATE SYNTHASE, CYTOPLASMIC-RELATED"/>
    <property type="match status" value="1"/>
</dbReference>
<dbReference type="Pfam" id="PF00763">
    <property type="entry name" value="THF_DHG_CYH"/>
    <property type="match status" value="1"/>
</dbReference>
<dbReference type="Pfam" id="PF02882">
    <property type="entry name" value="THF_DHG_CYH_C"/>
    <property type="match status" value="1"/>
</dbReference>
<dbReference type="PRINTS" id="PR00085">
    <property type="entry name" value="THFDHDRGNASE"/>
</dbReference>
<dbReference type="SUPFAM" id="SSF53223">
    <property type="entry name" value="Aminoacid dehydrogenase-like, N-terminal domain"/>
    <property type="match status" value="1"/>
</dbReference>
<dbReference type="SUPFAM" id="SSF51735">
    <property type="entry name" value="NAD(P)-binding Rossmann-fold domains"/>
    <property type="match status" value="1"/>
</dbReference>
<evidence type="ECO:0000255" key="1">
    <source>
        <dbReference type="HAMAP-Rule" id="MF_01576"/>
    </source>
</evidence>
<reference key="1">
    <citation type="submission" date="2007-04" db="EMBL/GenBank/DDBJ databases">
        <title>Complete sequence of Pyrobaculum arsenaticum DSM 13514.</title>
        <authorList>
            <consortium name="US DOE Joint Genome Institute"/>
            <person name="Copeland A."/>
            <person name="Lucas S."/>
            <person name="Lapidus A."/>
            <person name="Barry K."/>
            <person name="Glavina del Rio T."/>
            <person name="Dalin E."/>
            <person name="Tice H."/>
            <person name="Pitluck S."/>
            <person name="Chain P."/>
            <person name="Malfatti S."/>
            <person name="Shin M."/>
            <person name="Vergez L."/>
            <person name="Schmutz J."/>
            <person name="Larimer F."/>
            <person name="Land M."/>
            <person name="Hauser L."/>
            <person name="Kyrpides N."/>
            <person name="Mikhailova N."/>
            <person name="Cozen A.E."/>
            <person name="Fitz-Gibbon S.T."/>
            <person name="House C.H."/>
            <person name="Saltikov C."/>
            <person name="Lowe T.M."/>
            <person name="Richardson P."/>
        </authorList>
    </citation>
    <scope>NUCLEOTIDE SEQUENCE [LARGE SCALE GENOMIC DNA]</scope>
    <source>
        <strain>ATCC 700994 / DSM 13514 / JCM 11321 / PZ6</strain>
    </source>
</reference>
<name>FOLD_PYRAR</name>
<proteinExistence type="inferred from homology"/>
<sequence>MVTWIRGEGLHRQAKEWAREHVKRLEEVGITPKLAIILLNDDPVELATQRRFASLKARDVREVGGEAEIYELHDVPPERRTKEALRLIESLNKRDDVTGVIIQKPVPPFVDERALFAALSPEKDVDALTPDNKKRLLDRFDLDNDVLPCTPAGILELFRMYGIEIRGKDVVVVGKGELVGKPLSVMLMQLDATVTVLHALSKEREPYVKRADIVISAVGRPPEIYRDNPWRLTGEMIKEGVVVVGVGGKVDPISGKWHFDVDEKSVAEKASYLTPNIGGVGLATRARVLKNLIRTSYQVARLVVSSRIVGP</sequence>
<comment type="function">
    <text evidence="1">Catalyzes the oxidation of 5,10-methylenetetrahydrofolate to 5,10-methenyltetrahydrofolate and then the hydrolysis of 5,10-methenyltetrahydrofolate to 10-formyltetrahydrofolate.</text>
</comment>
<comment type="catalytic activity">
    <reaction evidence="1">
        <text>(6R)-5,10-methylene-5,6,7,8-tetrahydrofolate + NADP(+) = (6R)-5,10-methenyltetrahydrofolate + NADPH</text>
        <dbReference type="Rhea" id="RHEA:22812"/>
        <dbReference type="ChEBI" id="CHEBI:15636"/>
        <dbReference type="ChEBI" id="CHEBI:57455"/>
        <dbReference type="ChEBI" id="CHEBI:57783"/>
        <dbReference type="ChEBI" id="CHEBI:58349"/>
        <dbReference type="EC" id="1.5.1.5"/>
    </reaction>
</comment>
<comment type="catalytic activity">
    <reaction evidence="1">
        <text>(6R)-5,10-methenyltetrahydrofolate + H2O = (6R)-10-formyltetrahydrofolate + H(+)</text>
        <dbReference type="Rhea" id="RHEA:23700"/>
        <dbReference type="ChEBI" id="CHEBI:15377"/>
        <dbReference type="ChEBI" id="CHEBI:15378"/>
        <dbReference type="ChEBI" id="CHEBI:57455"/>
        <dbReference type="ChEBI" id="CHEBI:195366"/>
        <dbReference type="EC" id="3.5.4.9"/>
    </reaction>
</comment>
<comment type="pathway">
    <text evidence="1">One-carbon metabolism; tetrahydrofolate interconversion.</text>
</comment>
<comment type="subunit">
    <text evidence="1">Homodimer.</text>
</comment>
<comment type="similarity">
    <text evidence="1">Belongs to the tetrahydrofolate dehydrogenase/cyclohydrolase family.</text>
</comment>
<protein>
    <recommendedName>
        <fullName evidence="1">Bifunctional protein FolD</fullName>
    </recommendedName>
    <domain>
        <recommendedName>
            <fullName evidence="1">Methylenetetrahydrofolate dehydrogenase</fullName>
            <ecNumber evidence="1">1.5.1.5</ecNumber>
        </recommendedName>
    </domain>
    <domain>
        <recommendedName>
            <fullName evidence="1">Methenyltetrahydrofolate cyclohydrolase</fullName>
            <ecNumber evidence="1">3.5.4.9</ecNumber>
        </recommendedName>
    </domain>
</protein>